<organism>
    <name type="scientific">Pseudomonas fluorescens</name>
    <dbReference type="NCBI Taxonomy" id="294"/>
    <lineage>
        <taxon>Bacteria</taxon>
        <taxon>Pseudomonadati</taxon>
        <taxon>Pseudomonadota</taxon>
        <taxon>Gammaproteobacteria</taxon>
        <taxon>Pseudomonadales</taxon>
        <taxon>Pseudomonadaceae</taxon>
        <taxon>Pseudomonas</taxon>
    </lineage>
</organism>
<name>PHAZ_PSEFL</name>
<gene>
    <name type="primary">phaZ</name>
</gene>
<comment type="function">
    <text>Hydrolysis of poly(3-hydroxyoctanoic acid).</text>
</comment>
<comment type="catalytic activity">
    <reaction>
        <text>Hydrolyzes the polyester poly{oxycarbonyl[(R)-2-pentylethylene]} to oligomers.</text>
        <dbReference type="EC" id="3.1.1.76"/>
    </reaction>
</comment>
<comment type="subcellular location">
    <subcellularLocation>
        <location>Secreted</location>
    </subcellularLocation>
</comment>
<keyword id="KW-0903">Direct protein sequencing</keyword>
<keyword id="KW-0378">Hydrolase</keyword>
<keyword id="KW-0964">Secreted</keyword>
<keyword id="KW-0732">Signal</keyword>
<proteinExistence type="evidence at protein level"/>
<sequence length="278" mass="30267">MPLRTLLCGLLLAVCLGQHALAASRCSERPRTLLRPAEVSCSYQSTWLDSGLVGQRKIIYQTPLGTPPAGGWPVVLIYQGSFFPLNDFSYHSNLPFGGYYEGKLVQNLLDHGYAVIAPSAPADLFWQTNIPGLAQAYELSTDYDFLGNVLAAIASGHFGPLNAQRQYATGISSGGYNTSRMAVSFPGKFRALAVQSGSYATCSGPLCVVPDQLPADHPPTLFLHGFVDAVVPWWSMDLYYDRLLHQGIETARYTEPLGGHEWFAASPGKVLAWFNAHP</sequence>
<accession>Q51718</accession>
<protein>
    <recommendedName>
        <fullName>Poly(3-hydroxyoctanoate) depolymerase</fullName>
        <shortName>PHA depolymerase</shortName>
        <shortName>PHO depolymerase</shortName>
        <shortName>[P(3HO)] depolymerase</shortName>
        <ecNumber>3.1.1.76</ecNumber>
    </recommendedName>
</protein>
<feature type="signal peptide">
    <location>
        <begin position="1"/>
        <end position="33"/>
    </location>
</feature>
<feature type="chain" id="PRO_0000022046" description="Poly(3-hydroxyoctanoate) depolymerase">
    <location>
        <begin position="34"/>
        <end position="278"/>
    </location>
</feature>
<dbReference type="EC" id="3.1.1.76"/>
<dbReference type="EMBL" id="U10470">
    <property type="protein sequence ID" value="AAA64538.1"/>
    <property type="molecule type" value="Genomic_DNA"/>
</dbReference>
<dbReference type="SMR" id="Q51718"/>
<dbReference type="ESTHER" id="psefl-phaz">
    <property type="family name" value="Extracel-MCL-phaZ"/>
</dbReference>
<dbReference type="KEGG" id="ag:AAA64538"/>
<dbReference type="BioCyc" id="MetaCyc:MONOMER-15975"/>
<dbReference type="BRENDA" id="3.1.1.75">
    <property type="organism ID" value="5121"/>
</dbReference>
<dbReference type="GO" id="GO:0005576">
    <property type="term" value="C:extracellular region"/>
    <property type="evidence" value="ECO:0007669"/>
    <property type="project" value="UniProtKB-SubCell"/>
</dbReference>
<dbReference type="GO" id="GO:0050527">
    <property type="term" value="F:poly(3-hydroxyoctanoate) depolymerase activity"/>
    <property type="evidence" value="ECO:0007669"/>
    <property type="project" value="UniProtKB-EC"/>
</dbReference>
<dbReference type="Gene3D" id="3.40.50.1820">
    <property type="entry name" value="alpha/beta hydrolase"/>
    <property type="match status" value="1"/>
</dbReference>
<dbReference type="InterPro" id="IPR029058">
    <property type="entry name" value="AB_hydrolase_fold"/>
</dbReference>
<dbReference type="InterPro" id="IPR050955">
    <property type="entry name" value="Plant_Biomass_Hydrol_Est"/>
</dbReference>
<dbReference type="PANTHER" id="PTHR43037:SF5">
    <property type="entry name" value="FERULOYL ESTERASE"/>
    <property type="match status" value="1"/>
</dbReference>
<dbReference type="PANTHER" id="PTHR43037">
    <property type="entry name" value="UNNAMED PRODUCT-RELATED"/>
    <property type="match status" value="1"/>
</dbReference>
<dbReference type="SUPFAM" id="SSF53474">
    <property type="entry name" value="alpha/beta-Hydrolases"/>
    <property type="match status" value="1"/>
</dbReference>
<reference key="1">
    <citation type="journal article" date="1994" name="J. Bacteriol.">
        <title>Molecular characterization of the extracellular poly(3-hydroxyoctanoic acid) [P(3HO)] depolymerase gene of Pseudomonas fluorescens GK13 and of its gene product.</title>
        <authorList>
            <person name="Schirmer A."/>
            <person name="Jendrossek D."/>
        </authorList>
    </citation>
    <scope>NUCLEOTIDE SEQUENCE [GENOMIC DNA]</scope>
    <scope>PARTIAL PROTEIN SEQUENCE</scope>
    <scope>CHARACTERIZATION</scope>
    <source>
        <strain>DSM 7139 / GK13</strain>
    </source>
</reference>